<sequence>MSVKHVSVLLLLLQLSCCFRTGSCGKVLVWPMDFSLWMNLNVILDELVRRGHEVIVLRNSASIFIDPSKQANIKFETFPIAATKDDLEDLFVHYVSTWTNARQNSQWKYFSLLQKLFSEYSDSCENACKEVVFNKTLMTKLQESRFDILLSDAIGPCGELLAELLKIPFVYSLRFTPGYTMEKYSGGLSVPPSYVPIILSDLSGKMTFMERVNNMLCMLYFDFWFQMFNKKRWDQFYSEVLGRPVTFSELVGKADMWLIRSYWDLEFPRPTLPNIQFVGGLHCKPAKPLPKEMEEFVQSSGEEGVVVFSLGSMVSNMTEERANLIASAFAQLPQKVIWRFDGQKPETLGPNTRIYDWIPQNDLLGHPKTKAFVTHGGANGIYEAIHHGIPMVGLPLFGEQPDNIAHMTAKGAAIRLNWKTMSSEDLLNALKTVINDPSYKENVMTLSSIHHDQPMKPLDRAVFWIEYVMRHKGAKHLRVAAHDLTWFQYHSLDVVGFLVSCAAFLIFLVIKSYLFVYQKLVKIGKKQKRD</sequence>
<evidence type="ECO:0000250" key="1"/>
<evidence type="ECO:0000255" key="2"/>
<evidence type="ECO:0000305" key="3"/>
<proteinExistence type="evidence at transcript level"/>
<keyword id="KW-0256">Endoplasmic reticulum</keyword>
<keyword id="KW-0325">Glycoprotein</keyword>
<keyword id="KW-0328">Glycosyltransferase</keyword>
<keyword id="KW-0472">Membrane</keyword>
<keyword id="KW-0492">Microsome</keyword>
<keyword id="KW-1185">Reference proteome</keyword>
<keyword id="KW-0732">Signal</keyword>
<keyword id="KW-0808">Transferase</keyword>
<keyword id="KW-0812">Transmembrane</keyword>
<keyword id="KW-1133">Transmembrane helix</keyword>
<accession>P36513</accession>
<gene>
    <name type="primary">UGT2B14</name>
</gene>
<name>UDB14_RABIT</name>
<protein>
    <recommendedName>
        <fullName>UDP-glucuronosyltransferase 2B14</fullName>
        <shortName>UDPGT 2B14</shortName>
        <ecNumber>2.4.1.17</ecNumber>
    </recommendedName>
    <alternativeName>
        <fullName>EGT12</fullName>
    </alternativeName>
</protein>
<organism>
    <name type="scientific">Oryctolagus cuniculus</name>
    <name type="common">Rabbit</name>
    <dbReference type="NCBI Taxonomy" id="9986"/>
    <lineage>
        <taxon>Eukaryota</taxon>
        <taxon>Metazoa</taxon>
        <taxon>Chordata</taxon>
        <taxon>Craniata</taxon>
        <taxon>Vertebrata</taxon>
        <taxon>Euteleostomi</taxon>
        <taxon>Mammalia</taxon>
        <taxon>Eutheria</taxon>
        <taxon>Euarchontoglires</taxon>
        <taxon>Glires</taxon>
        <taxon>Lagomorpha</taxon>
        <taxon>Leporidae</taxon>
        <taxon>Oryctolagus</taxon>
    </lineage>
</organism>
<feature type="signal peptide" evidence="1">
    <location>
        <begin position="1"/>
        <end position="24"/>
    </location>
</feature>
<feature type="chain" id="PRO_0000036038" description="UDP-glucuronosyltransferase 2B14">
    <location>
        <begin position="25"/>
        <end position="530"/>
    </location>
</feature>
<feature type="transmembrane region" description="Helical" evidence="2">
    <location>
        <begin position="494"/>
        <end position="510"/>
    </location>
</feature>
<feature type="glycosylation site" description="N-linked (GlcNAc...) asparagine" evidence="2">
    <location>
        <position position="134"/>
    </location>
</feature>
<feature type="glycosylation site" description="N-linked (GlcNAc...) asparagine" evidence="2">
    <location>
        <position position="316"/>
    </location>
</feature>
<reference key="1">
    <citation type="journal article" date="1993" name="J. Biol. Chem.">
        <title>Cloning and characterization of rabbit liver UDP-glucuronosyltransferase cDNAs. Developmental and inducible expression of 4-hydroxybiphenyl UGT2B13.</title>
        <authorList>
            <person name="Tukey R.H."/>
            <person name="Pendurthi U.R."/>
            <person name="Nguyen N.T."/>
            <person name="Green M.D."/>
            <person name="Tephly T.R."/>
        </authorList>
    </citation>
    <scope>NUCLEOTIDE SEQUENCE [MRNA]</scope>
    <source>
        <strain>New Zealand white</strain>
        <tissue>Liver</tissue>
    </source>
</reference>
<comment type="function">
    <text>UDPGT is of major importance in the conjugation and subsequent elimination of potentially toxic xenobiotics and endogenous compounds.</text>
</comment>
<comment type="catalytic activity">
    <reaction>
        <text>glucuronate acceptor + UDP-alpha-D-glucuronate = acceptor beta-D-glucuronoside + UDP + H(+)</text>
        <dbReference type="Rhea" id="RHEA:21032"/>
        <dbReference type="ChEBI" id="CHEBI:15378"/>
        <dbReference type="ChEBI" id="CHEBI:58052"/>
        <dbReference type="ChEBI" id="CHEBI:58223"/>
        <dbReference type="ChEBI" id="CHEBI:132367"/>
        <dbReference type="ChEBI" id="CHEBI:132368"/>
        <dbReference type="EC" id="2.4.1.17"/>
    </reaction>
</comment>
<comment type="subcellular location">
    <subcellularLocation>
        <location evidence="3">Microsome membrane</location>
        <topology evidence="3">Single-pass membrane protein</topology>
    </subcellularLocation>
    <subcellularLocation>
        <location evidence="3">Endoplasmic reticulum membrane</location>
        <topology evidence="3">Single-pass membrane protein</topology>
    </subcellularLocation>
</comment>
<comment type="developmental stage">
    <text>Expressed primarily in adult rabbits.</text>
</comment>
<comment type="similarity">
    <text evidence="3">Belongs to the UDP-glycosyltransferase family.</text>
</comment>
<dbReference type="EC" id="2.4.1.17"/>
<dbReference type="EMBL" id="L01082">
    <property type="protein sequence ID" value="AAA18021.1"/>
    <property type="molecule type" value="mRNA"/>
</dbReference>
<dbReference type="PIR" id="C47113">
    <property type="entry name" value="C47113"/>
</dbReference>
<dbReference type="RefSeq" id="NP_001075709.1">
    <property type="nucleotide sequence ID" value="NM_001082240.1"/>
</dbReference>
<dbReference type="SMR" id="P36513"/>
<dbReference type="FunCoup" id="P36513">
    <property type="interactions" value="321"/>
</dbReference>
<dbReference type="STRING" id="9986.ENSOCUP00000014798"/>
<dbReference type="CAZy" id="GT1">
    <property type="family name" value="Glycosyltransferase Family 1"/>
</dbReference>
<dbReference type="GlyCosmos" id="P36513">
    <property type="glycosylation" value="2 sites, No reported glycans"/>
</dbReference>
<dbReference type="PaxDb" id="9986-ENSOCUP00000014798"/>
<dbReference type="GeneID" id="100009057"/>
<dbReference type="KEGG" id="ocu:100009057"/>
<dbReference type="CTD" id="100009057"/>
<dbReference type="eggNOG" id="KOG1192">
    <property type="taxonomic scope" value="Eukaryota"/>
</dbReference>
<dbReference type="InParanoid" id="P36513"/>
<dbReference type="OrthoDB" id="5835829at2759"/>
<dbReference type="Proteomes" id="UP000001811">
    <property type="component" value="Unplaced"/>
</dbReference>
<dbReference type="GO" id="GO:0005789">
    <property type="term" value="C:endoplasmic reticulum membrane"/>
    <property type="evidence" value="ECO:0007669"/>
    <property type="project" value="UniProtKB-SubCell"/>
</dbReference>
<dbReference type="GO" id="GO:0015020">
    <property type="term" value="F:glucuronosyltransferase activity"/>
    <property type="evidence" value="ECO:0007669"/>
    <property type="project" value="UniProtKB-EC"/>
</dbReference>
<dbReference type="CDD" id="cd03784">
    <property type="entry name" value="GT1_Gtf-like"/>
    <property type="match status" value="1"/>
</dbReference>
<dbReference type="FunFam" id="3.40.50.2000:FF:000001">
    <property type="entry name" value="UDP-glucuronosyltransferase"/>
    <property type="match status" value="1"/>
</dbReference>
<dbReference type="FunFam" id="3.40.50.2000:FF:000081">
    <property type="entry name" value="UDP-glucuronosyltransferase 2A2"/>
    <property type="match status" value="1"/>
</dbReference>
<dbReference type="Gene3D" id="3.40.50.2000">
    <property type="entry name" value="Glycogen Phosphorylase B"/>
    <property type="match status" value="2"/>
</dbReference>
<dbReference type="InterPro" id="IPR050271">
    <property type="entry name" value="UDP-glycosyltransferase"/>
</dbReference>
<dbReference type="InterPro" id="IPR002213">
    <property type="entry name" value="UDP_glucos_trans"/>
</dbReference>
<dbReference type="InterPro" id="IPR035595">
    <property type="entry name" value="UDP_glycos_trans_CS"/>
</dbReference>
<dbReference type="PANTHER" id="PTHR48043">
    <property type="entry name" value="EG:EG0003.4 PROTEIN-RELATED"/>
    <property type="match status" value="1"/>
</dbReference>
<dbReference type="PANTHER" id="PTHR48043:SF12">
    <property type="entry name" value="UDP-GLUCURONOSYLTRANSFERASE 2B4"/>
    <property type="match status" value="1"/>
</dbReference>
<dbReference type="Pfam" id="PF00201">
    <property type="entry name" value="UDPGT"/>
    <property type="match status" value="1"/>
</dbReference>
<dbReference type="SUPFAM" id="SSF53756">
    <property type="entry name" value="UDP-Glycosyltransferase/glycogen phosphorylase"/>
    <property type="match status" value="1"/>
</dbReference>
<dbReference type="PROSITE" id="PS00375">
    <property type="entry name" value="UDPGT"/>
    <property type="match status" value="1"/>
</dbReference>